<feature type="chain" id="PRO_0000145925" description="Phosphoglycerate kinase">
    <location>
        <begin position="1"/>
        <end position="403"/>
    </location>
</feature>
<feature type="binding site" evidence="1">
    <location>
        <begin position="21"/>
        <end position="23"/>
    </location>
    <ligand>
        <name>substrate</name>
    </ligand>
</feature>
<feature type="binding site" evidence="1">
    <location>
        <position position="36"/>
    </location>
    <ligand>
        <name>substrate</name>
    </ligand>
</feature>
<feature type="binding site" evidence="1">
    <location>
        <begin position="59"/>
        <end position="62"/>
    </location>
    <ligand>
        <name>substrate</name>
    </ligand>
</feature>
<feature type="binding site" evidence="1">
    <location>
        <position position="119"/>
    </location>
    <ligand>
        <name>substrate</name>
    </ligand>
</feature>
<feature type="binding site" evidence="1">
    <location>
        <position position="154"/>
    </location>
    <ligand>
        <name>substrate</name>
    </ligand>
</feature>
<feature type="binding site" evidence="1">
    <location>
        <position position="207"/>
    </location>
    <ligand>
        <name>ATP</name>
        <dbReference type="ChEBI" id="CHEBI:30616"/>
    </ligand>
</feature>
<feature type="binding site" evidence="1">
    <location>
        <position position="299"/>
    </location>
    <ligand>
        <name>ATP</name>
        <dbReference type="ChEBI" id="CHEBI:30616"/>
    </ligand>
</feature>
<feature type="binding site" evidence="1">
    <location>
        <position position="330"/>
    </location>
    <ligand>
        <name>ATP</name>
        <dbReference type="ChEBI" id="CHEBI:30616"/>
    </ligand>
</feature>
<feature type="binding site" evidence="1">
    <location>
        <begin position="357"/>
        <end position="360"/>
    </location>
    <ligand>
        <name>ATP</name>
        <dbReference type="ChEBI" id="CHEBI:30616"/>
    </ligand>
</feature>
<keyword id="KW-0067">ATP-binding</keyword>
<keyword id="KW-0963">Cytoplasm</keyword>
<keyword id="KW-0324">Glycolysis</keyword>
<keyword id="KW-0418">Kinase</keyword>
<keyword id="KW-0547">Nucleotide-binding</keyword>
<keyword id="KW-0808">Transferase</keyword>
<gene>
    <name evidence="1" type="primary">pgk</name>
    <name type="ordered locus">CCA_00061</name>
</gene>
<protein>
    <recommendedName>
        <fullName evidence="1">Phosphoglycerate kinase</fullName>
        <ecNumber evidence="1">2.7.2.3</ecNumber>
    </recommendedName>
</protein>
<proteinExistence type="inferred from homology"/>
<evidence type="ECO:0000255" key="1">
    <source>
        <dbReference type="HAMAP-Rule" id="MF_00145"/>
    </source>
</evidence>
<accession>Q824S8</accession>
<reference key="1">
    <citation type="journal article" date="2003" name="Nucleic Acids Res.">
        <title>Genome sequence of Chlamydophila caviae (Chlamydia psittaci GPIC): examining the role of niche-specific genes in the evolution of the Chlamydiaceae.</title>
        <authorList>
            <person name="Read T.D."/>
            <person name="Myers G.S.A."/>
            <person name="Brunham R.C."/>
            <person name="Nelson W.C."/>
            <person name="Paulsen I.T."/>
            <person name="Heidelberg J.F."/>
            <person name="Holtzapple E.K."/>
            <person name="Khouri H.M."/>
            <person name="Federova N.B."/>
            <person name="Carty H.A."/>
            <person name="Umayam L.A."/>
            <person name="Haft D.H."/>
            <person name="Peterson J.D."/>
            <person name="Beanan M.J."/>
            <person name="White O."/>
            <person name="Salzberg S.L."/>
            <person name="Hsia R.-C."/>
            <person name="McClarty G."/>
            <person name="Rank R.G."/>
            <person name="Bavoil P.M."/>
            <person name="Fraser C.M."/>
        </authorList>
    </citation>
    <scope>NUCLEOTIDE SEQUENCE [LARGE SCALE GENOMIC DNA]</scope>
    <source>
        <strain>ATCC VR-813 / DSM 19441 / 03DC25 / GPIC</strain>
    </source>
</reference>
<name>PGK_CHLCV</name>
<dbReference type="EC" id="2.7.2.3" evidence="1"/>
<dbReference type="EMBL" id="AE015925">
    <property type="protein sequence ID" value="AAP04813.1"/>
    <property type="molecule type" value="Genomic_DNA"/>
</dbReference>
<dbReference type="RefSeq" id="WP_011006034.1">
    <property type="nucleotide sequence ID" value="NC_003361.3"/>
</dbReference>
<dbReference type="SMR" id="Q824S8"/>
<dbReference type="STRING" id="227941.CCA_00061"/>
<dbReference type="KEGG" id="cca:CCA_00061"/>
<dbReference type="eggNOG" id="COG0126">
    <property type="taxonomic scope" value="Bacteria"/>
</dbReference>
<dbReference type="HOGENOM" id="CLU_025427_0_2_0"/>
<dbReference type="OrthoDB" id="9808460at2"/>
<dbReference type="UniPathway" id="UPA00109">
    <property type="reaction ID" value="UER00185"/>
</dbReference>
<dbReference type="Proteomes" id="UP000002193">
    <property type="component" value="Chromosome"/>
</dbReference>
<dbReference type="GO" id="GO:0005829">
    <property type="term" value="C:cytosol"/>
    <property type="evidence" value="ECO:0007669"/>
    <property type="project" value="TreeGrafter"/>
</dbReference>
<dbReference type="GO" id="GO:0043531">
    <property type="term" value="F:ADP binding"/>
    <property type="evidence" value="ECO:0007669"/>
    <property type="project" value="TreeGrafter"/>
</dbReference>
<dbReference type="GO" id="GO:0005524">
    <property type="term" value="F:ATP binding"/>
    <property type="evidence" value="ECO:0007669"/>
    <property type="project" value="UniProtKB-KW"/>
</dbReference>
<dbReference type="GO" id="GO:0004618">
    <property type="term" value="F:phosphoglycerate kinase activity"/>
    <property type="evidence" value="ECO:0007669"/>
    <property type="project" value="UniProtKB-UniRule"/>
</dbReference>
<dbReference type="GO" id="GO:0006094">
    <property type="term" value="P:gluconeogenesis"/>
    <property type="evidence" value="ECO:0007669"/>
    <property type="project" value="TreeGrafter"/>
</dbReference>
<dbReference type="GO" id="GO:0006096">
    <property type="term" value="P:glycolytic process"/>
    <property type="evidence" value="ECO:0007669"/>
    <property type="project" value="UniProtKB-UniRule"/>
</dbReference>
<dbReference type="CDD" id="cd00318">
    <property type="entry name" value="Phosphoglycerate_kinase"/>
    <property type="match status" value="1"/>
</dbReference>
<dbReference type="FunFam" id="3.40.50.1260:FF:000007">
    <property type="entry name" value="Phosphoglycerate kinase"/>
    <property type="match status" value="1"/>
</dbReference>
<dbReference type="FunFam" id="3.40.50.1260:FF:000011">
    <property type="entry name" value="Phosphoglycerate kinase"/>
    <property type="match status" value="1"/>
</dbReference>
<dbReference type="Gene3D" id="3.40.50.1260">
    <property type="entry name" value="Phosphoglycerate kinase, N-terminal domain"/>
    <property type="match status" value="2"/>
</dbReference>
<dbReference type="HAMAP" id="MF_00145">
    <property type="entry name" value="Phosphoglyc_kinase"/>
    <property type="match status" value="1"/>
</dbReference>
<dbReference type="InterPro" id="IPR001576">
    <property type="entry name" value="Phosphoglycerate_kinase"/>
</dbReference>
<dbReference type="InterPro" id="IPR015911">
    <property type="entry name" value="Phosphoglycerate_kinase_CS"/>
</dbReference>
<dbReference type="InterPro" id="IPR015824">
    <property type="entry name" value="Phosphoglycerate_kinase_N"/>
</dbReference>
<dbReference type="InterPro" id="IPR036043">
    <property type="entry name" value="Phosphoglycerate_kinase_sf"/>
</dbReference>
<dbReference type="PANTHER" id="PTHR11406">
    <property type="entry name" value="PHOSPHOGLYCERATE KINASE"/>
    <property type="match status" value="1"/>
</dbReference>
<dbReference type="PANTHER" id="PTHR11406:SF23">
    <property type="entry name" value="PHOSPHOGLYCERATE KINASE 1, CHLOROPLASTIC-RELATED"/>
    <property type="match status" value="1"/>
</dbReference>
<dbReference type="Pfam" id="PF00162">
    <property type="entry name" value="PGK"/>
    <property type="match status" value="1"/>
</dbReference>
<dbReference type="PIRSF" id="PIRSF000724">
    <property type="entry name" value="Pgk"/>
    <property type="match status" value="1"/>
</dbReference>
<dbReference type="PRINTS" id="PR00477">
    <property type="entry name" value="PHGLYCKINASE"/>
</dbReference>
<dbReference type="SUPFAM" id="SSF53748">
    <property type="entry name" value="Phosphoglycerate kinase"/>
    <property type="match status" value="1"/>
</dbReference>
<dbReference type="PROSITE" id="PS00111">
    <property type="entry name" value="PGLYCERATE_KINASE"/>
    <property type="match status" value="1"/>
</dbReference>
<organism>
    <name type="scientific">Chlamydia caviae (strain ATCC VR-813 / DSM 19441 / 03DC25 / GPIC)</name>
    <name type="common">Chlamydophila caviae</name>
    <dbReference type="NCBI Taxonomy" id="227941"/>
    <lineage>
        <taxon>Bacteria</taxon>
        <taxon>Pseudomonadati</taxon>
        <taxon>Chlamydiota</taxon>
        <taxon>Chlamydiia</taxon>
        <taxon>Chlamydiales</taxon>
        <taxon>Chlamydiaceae</taxon>
        <taxon>Chlamydia/Chlamydophila group</taxon>
        <taxon>Chlamydia</taxon>
    </lineage>
</organism>
<sequence length="403" mass="43259">MDRLTVRELSPEENKVLVRVDFNVPIKDGKILDDIRIRSAMPTINYLLQKRAAVILMSHLGRPKGTGFEEKYSLQPVVEVLEGYLGHHVPLAPDCIGEVARQAVAQLSPGRVLLLENLRFHRGEEHPEEDPTFAAELSSYGDFYVNDAFGTSHRKHASVYHVPQAFPGRSAAGLLMEKELEFLGQHLLHSPKRPFTAILGGAKVSSKIGVIEALLSQVNNLLLAGGMGFTFLKALGKSVGNSLVEESGIELARRVLKLAEQRNVRIVLPIDVKVAKACEPGVSWSETLIDQGIPADLEGLDIGTKTIQEFCKIIDASATVFWNGPVGVYEVPPFDQGSMAIANCLARHSSATTVVGGGDAAAVVALAGCTSQVSHVSTGGGASLEFLENGFLPGTEVLSPAQD</sequence>
<comment type="catalytic activity">
    <reaction evidence="1">
        <text>(2R)-3-phosphoglycerate + ATP = (2R)-3-phospho-glyceroyl phosphate + ADP</text>
        <dbReference type="Rhea" id="RHEA:14801"/>
        <dbReference type="ChEBI" id="CHEBI:30616"/>
        <dbReference type="ChEBI" id="CHEBI:57604"/>
        <dbReference type="ChEBI" id="CHEBI:58272"/>
        <dbReference type="ChEBI" id="CHEBI:456216"/>
        <dbReference type="EC" id="2.7.2.3"/>
    </reaction>
</comment>
<comment type="pathway">
    <text evidence="1">Carbohydrate degradation; glycolysis; pyruvate from D-glyceraldehyde 3-phosphate: step 2/5.</text>
</comment>
<comment type="subunit">
    <text evidence="1">Monomer.</text>
</comment>
<comment type="subcellular location">
    <subcellularLocation>
        <location evidence="1">Cytoplasm</location>
    </subcellularLocation>
</comment>
<comment type="similarity">
    <text evidence="1">Belongs to the phosphoglycerate kinase family.</text>
</comment>